<evidence type="ECO:0000255" key="1">
    <source>
        <dbReference type="HAMAP-Rule" id="MF_00135"/>
    </source>
</evidence>
<dbReference type="EC" id="5.3.1.24" evidence="1"/>
<dbReference type="EMBL" id="AM743169">
    <property type="protein sequence ID" value="CAQ46849.1"/>
    <property type="molecule type" value="Genomic_DNA"/>
</dbReference>
<dbReference type="RefSeq" id="WP_005410480.1">
    <property type="nucleotide sequence ID" value="NC_010943.1"/>
</dbReference>
<dbReference type="SMR" id="B2FNZ5"/>
<dbReference type="EnsemblBacteria" id="CAQ46849">
    <property type="protein sequence ID" value="CAQ46849"/>
    <property type="gene ID" value="Smlt3423"/>
</dbReference>
<dbReference type="KEGG" id="sml:Smlt3423"/>
<dbReference type="eggNOG" id="COG0135">
    <property type="taxonomic scope" value="Bacteria"/>
</dbReference>
<dbReference type="HOGENOM" id="CLU_076364_2_0_6"/>
<dbReference type="UniPathway" id="UPA00035">
    <property type="reaction ID" value="UER00042"/>
</dbReference>
<dbReference type="Proteomes" id="UP000008840">
    <property type="component" value="Chromosome"/>
</dbReference>
<dbReference type="GO" id="GO:0004640">
    <property type="term" value="F:phosphoribosylanthranilate isomerase activity"/>
    <property type="evidence" value="ECO:0007669"/>
    <property type="project" value="UniProtKB-UniRule"/>
</dbReference>
<dbReference type="GO" id="GO:0000162">
    <property type="term" value="P:L-tryptophan biosynthetic process"/>
    <property type="evidence" value="ECO:0007669"/>
    <property type="project" value="UniProtKB-UniRule"/>
</dbReference>
<dbReference type="CDD" id="cd00405">
    <property type="entry name" value="PRAI"/>
    <property type="match status" value="1"/>
</dbReference>
<dbReference type="Gene3D" id="3.20.20.70">
    <property type="entry name" value="Aldolase class I"/>
    <property type="match status" value="1"/>
</dbReference>
<dbReference type="HAMAP" id="MF_00135">
    <property type="entry name" value="PRAI"/>
    <property type="match status" value="1"/>
</dbReference>
<dbReference type="InterPro" id="IPR013785">
    <property type="entry name" value="Aldolase_TIM"/>
</dbReference>
<dbReference type="InterPro" id="IPR001240">
    <property type="entry name" value="PRAI_dom"/>
</dbReference>
<dbReference type="InterPro" id="IPR011060">
    <property type="entry name" value="RibuloseP-bd_barrel"/>
</dbReference>
<dbReference type="InterPro" id="IPR044643">
    <property type="entry name" value="TrpF_fam"/>
</dbReference>
<dbReference type="NCBIfam" id="NF002296">
    <property type="entry name" value="PRK01222.1-2"/>
    <property type="match status" value="1"/>
</dbReference>
<dbReference type="NCBIfam" id="NF002298">
    <property type="entry name" value="PRK01222.1-4"/>
    <property type="match status" value="1"/>
</dbReference>
<dbReference type="PANTHER" id="PTHR42894">
    <property type="entry name" value="N-(5'-PHOSPHORIBOSYL)ANTHRANILATE ISOMERASE"/>
    <property type="match status" value="1"/>
</dbReference>
<dbReference type="PANTHER" id="PTHR42894:SF1">
    <property type="entry name" value="N-(5'-PHOSPHORIBOSYL)ANTHRANILATE ISOMERASE"/>
    <property type="match status" value="1"/>
</dbReference>
<dbReference type="Pfam" id="PF00697">
    <property type="entry name" value="PRAI"/>
    <property type="match status" value="1"/>
</dbReference>
<dbReference type="SUPFAM" id="SSF51366">
    <property type="entry name" value="Ribulose-phoshate binding barrel"/>
    <property type="match status" value="1"/>
</dbReference>
<accession>B2FNZ5</accession>
<reference key="1">
    <citation type="journal article" date="2008" name="Genome Biol.">
        <title>The complete genome, comparative and functional analysis of Stenotrophomonas maltophilia reveals an organism heavily shielded by drug resistance determinants.</title>
        <authorList>
            <person name="Crossman L.C."/>
            <person name="Gould V.C."/>
            <person name="Dow J.M."/>
            <person name="Vernikos G.S."/>
            <person name="Okazaki A."/>
            <person name="Sebaihia M."/>
            <person name="Saunders D."/>
            <person name="Arrowsmith C."/>
            <person name="Carver T."/>
            <person name="Peters N."/>
            <person name="Adlem E."/>
            <person name="Kerhornou A."/>
            <person name="Lord A."/>
            <person name="Murphy L."/>
            <person name="Seeger K."/>
            <person name="Squares R."/>
            <person name="Rutter S."/>
            <person name="Quail M.A."/>
            <person name="Rajandream M.A."/>
            <person name="Harris D."/>
            <person name="Churcher C."/>
            <person name="Bentley S.D."/>
            <person name="Parkhill J."/>
            <person name="Thomson N.R."/>
            <person name="Avison M.B."/>
        </authorList>
    </citation>
    <scope>NUCLEOTIDE SEQUENCE [LARGE SCALE GENOMIC DNA]</scope>
    <source>
        <strain>K279a</strain>
    </source>
</reference>
<gene>
    <name evidence="1" type="primary">trpF</name>
    <name type="ordered locus">Smlt3423</name>
</gene>
<proteinExistence type="inferred from homology"/>
<organism>
    <name type="scientific">Stenotrophomonas maltophilia (strain K279a)</name>
    <dbReference type="NCBI Taxonomy" id="522373"/>
    <lineage>
        <taxon>Bacteria</taxon>
        <taxon>Pseudomonadati</taxon>
        <taxon>Pseudomonadota</taxon>
        <taxon>Gammaproteobacteria</taxon>
        <taxon>Lysobacterales</taxon>
        <taxon>Lysobacteraceae</taxon>
        <taxon>Stenotrophomonas</taxon>
        <taxon>Stenotrophomonas maltophilia group</taxon>
    </lineage>
</organism>
<sequence>MSRSYYRTRIKFCGMTRAGDVRLAGELGVDAVGFIFARESSRRVAPAEARAMRQAIAPMVDVVALFRNNSKEEVREVLRTVRPTLLQFHGEEDESFCRSFNMPYLKAIAMGGREEVNARTLQLRYPSAAGFLFDSHAPGGGGGTGVAFDWGRIPTGLHRPFLLAGGLNPENVYDAVLATLPWGVDVSSGIELEPGIKDGYRMRTFVEEVRRADCTVLE</sequence>
<comment type="catalytic activity">
    <reaction evidence="1">
        <text>N-(5-phospho-beta-D-ribosyl)anthranilate = 1-(2-carboxyphenylamino)-1-deoxy-D-ribulose 5-phosphate</text>
        <dbReference type="Rhea" id="RHEA:21540"/>
        <dbReference type="ChEBI" id="CHEBI:18277"/>
        <dbReference type="ChEBI" id="CHEBI:58613"/>
        <dbReference type="EC" id="5.3.1.24"/>
    </reaction>
</comment>
<comment type="pathway">
    <text evidence="1">Amino-acid biosynthesis; L-tryptophan biosynthesis; L-tryptophan from chorismate: step 3/5.</text>
</comment>
<comment type="similarity">
    <text evidence="1">Belongs to the TrpF family.</text>
</comment>
<name>TRPF_STRMK</name>
<feature type="chain" id="PRO_1000095941" description="N-(5'-phosphoribosyl)anthranilate isomerase">
    <location>
        <begin position="1"/>
        <end position="218"/>
    </location>
</feature>
<protein>
    <recommendedName>
        <fullName evidence="1">N-(5'-phosphoribosyl)anthranilate isomerase</fullName>
        <shortName evidence="1">PRAI</shortName>
        <ecNumber evidence="1">5.3.1.24</ecNumber>
    </recommendedName>
</protein>
<keyword id="KW-0028">Amino-acid biosynthesis</keyword>
<keyword id="KW-0057">Aromatic amino acid biosynthesis</keyword>
<keyword id="KW-0413">Isomerase</keyword>
<keyword id="KW-1185">Reference proteome</keyword>
<keyword id="KW-0822">Tryptophan biosynthesis</keyword>